<feature type="chain" id="PRO_1000196814" description="Formate--tetrahydrofolate ligase">
    <location>
        <begin position="1"/>
        <end position="557"/>
    </location>
</feature>
<feature type="binding site" evidence="1">
    <location>
        <begin position="65"/>
        <end position="72"/>
    </location>
    <ligand>
        <name>ATP</name>
        <dbReference type="ChEBI" id="CHEBI:30616"/>
    </ligand>
</feature>
<protein>
    <recommendedName>
        <fullName evidence="1">Formate--tetrahydrofolate ligase</fullName>
        <ecNumber evidence="1">6.3.4.3</ecNumber>
    </recommendedName>
    <alternativeName>
        <fullName evidence="1">Formyltetrahydrofolate synthetase</fullName>
        <shortName evidence="1">FHS</shortName>
        <shortName evidence="1">FTHFS</shortName>
    </alternativeName>
</protein>
<accession>A9VZT0</accession>
<organism>
    <name type="scientific">Methylorubrum extorquens (strain PA1)</name>
    <name type="common">Methylobacterium extorquens</name>
    <dbReference type="NCBI Taxonomy" id="419610"/>
    <lineage>
        <taxon>Bacteria</taxon>
        <taxon>Pseudomonadati</taxon>
        <taxon>Pseudomonadota</taxon>
        <taxon>Alphaproteobacteria</taxon>
        <taxon>Hyphomicrobiales</taxon>
        <taxon>Methylobacteriaceae</taxon>
        <taxon>Methylorubrum</taxon>
    </lineage>
</organism>
<keyword id="KW-0067">ATP-binding</keyword>
<keyword id="KW-0436">Ligase</keyword>
<keyword id="KW-0547">Nucleotide-binding</keyword>
<keyword id="KW-0554">One-carbon metabolism</keyword>
<reference key="1">
    <citation type="submission" date="2007-12" db="EMBL/GenBank/DDBJ databases">
        <title>Complete sequence of Methylobacterium extorquens PA1.</title>
        <authorList>
            <consortium name="US DOE Joint Genome Institute"/>
            <person name="Copeland A."/>
            <person name="Lucas S."/>
            <person name="Lapidus A."/>
            <person name="Barry K."/>
            <person name="Glavina del Rio T."/>
            <person name="Dalin E."/>
            <person name="Tice H."/>
            <person name="Pitluck S."/>
            <person name="Saunders E."/>
            <person name="Brettin T."/>
            <person name="Bruce D."/>
            <person name="Detter J.C."/>
            <person name="Han C."/>
            <person name="Schmutz J."/>
            <person name="Larimer F."/>
            <person name="Land M."/>
            <person name="Hauser L."/>
            <person name="Kyrpides N."/>
            <person name="Kim E."/>
            <person name="Marx C."/>
            <person name="Richardson P."/>
        </authorList>
    </citation>
    <scope>NUCLEOTIDE SEQUENCE [LARGE SCALE GENOMIC DNA]</scope>
    <source>
        <strain>PA1</strain>
    </source>
</reference>
<comment type="catalytic activity">
    <reaction evidence="1">
        <text>(6S)-5,6,7,8-tetrahydrofolate + formate + ATP = (6R)-10-formyltetrahydrofolate + ADP + phosphate</text>
        <dbReference type="Rhea" id="RHEA:20221"/>
        <dbReference type="ChEBI" id="CHEBI:15740"/>
        <dbReference type="ChEBI" id="CHEBI:30616"/>
        <dbReference type="ChEBI" id="CHEBI:43474"/>
        <dbReference type="ChEBI" id="CHEBI:57453"/>
        <dbReference type="ChEBI" id="CHEBI:195366"/>
        <dbReference type="ChEBI" id="CHEBI:456216"/>
        <dbReference type="EC" id="6.3.4.3"/>
    </reaction>
</comment>
<comment type="pathway">
    <text evidence="1">One-carbon metabolism; tetrahydrofolate interconversion.</text>
</comment>
<comment type="similarity">
    <text evidence="1">Belongs to the formate--tetrahydrofolate ligase family.</text>
</comment>
<sequence>MPSDIEIARAATLKPIAQVAEKLGIPDEALHNYGKHIAKIDHDFIASLEGKPEGKLVLVTAISPTPAGEGKTTTTVGLGDALNRIGKRAVMCLREPSLGPCFGMKGGAAGGGKAQVVPMEQINLHFTGDFHAITSAHSLAAALIDNHIYWANELNIDVRRIHWRRVVDMNDRALRAINQSLGGVANGFPREDGFDITVASEVMAVFCLAKNLADLEERLGRIVIAETRDRKPVTLADVKATGAMTVLLKDALQPNLVQTLEGNPALIHGGPFANIAHGCNSVIATRTGLRLADYTVTEAGFGADLGAEKFIDIKCRQTGLKPSAVVIVATIRALKMHGGVNKKDLQAENLDALEKGFANLERHVNNVRSFGLPVVVGVNHFFQDTDAEHARLKELCRDRLQVEAITCKHWAEGGAGAEALAQAVVKLAEGEQKPLTFAYETETKITDKIKAIATKLYGAADIQIESKAATKLAGFEKDGYGKLPVCMAKTQYSFSTDPTLMGAPSGHLVSVRDVRLSAGAGFVVVICGEIMTMPGLPKVPAADTIRLDANGQIDGLF</sequence>
<gene>
    <name evidence="1" type="primary">fhs</name>
    <name type="ordered locus">Mext_0414</name>
</gene>
<name>FTHS_METEP</name>
<evidence type="ECO:0000255" key="1">
    <source>
        <dbReference type="HAMAP-Rule" id="MF_01543"/>
    </source>
</evidence>
<dbReference type="EC" id="6.3.4.3" evidence="1"/>
<dbReference type="EMBL" id="CP000908">
    <property type="protein sequence ID" value="ABY28836.1"/>
    <property type="molecule type" value="Genomic_DNA"/>
</dbReference>
<dbReference type="RefSeq" id="WP_012252208.1">
    <property type="nucleotide sequence ID" value="NC_010172.1"/>
</dbReference>
<dbReference type="SMR" id="A9VZT0"/>
<dbReference type="KEGG" id="mex:Mext_0414"/>
<dbReference type="eggNOG" id="COG2759">
    <property type="taxonomic scope" value="Bacteria"/>
</dbReference>
<dbReference type="HOGENOM" id="CLU_003601_3_3_5"/>
<dbReference type="BioCyc" id="MEXT419610:MEXT_RS02055-MONOMER"/>
<dbReference type="UniPathway" id="UPA00193"/>
<dbReference type="GO" id="GO:0005524">
    <property type="term" value="F:ATP binding"/>
    <property type="evidence" value="ECO:0007669"/>
    <property type="project" value="UniProtKB-UniRule"/>
</dbReference>
<dbReference type="GO" id="GO:0004329">
    <property type="term" value="F:formate-tetrahydrofolate ligase activity"/>
    <property type="evidence" value="ECO:0007669"/>
    <property type="project" value="UniProtKB-UniRule"/>
</dbReference>
<dbReference type="GO" id="GO:0035999">
    <property type="term" value="P:tetrahydrofolate interconversion"/>
    <property type="evidence" value="ECO:0007669"/>
    <property type="project" value="UniProtKB-UniRule"/>
</dbReference>
<dbReference type="CDD" id="cd00477">
    <property type="entry name" value="FTHFS"/>
    <property type="match status" value="1"/>
</dbReference>
<dbReference type="FunFam" id="3.30.1510.10:FF:000001">
    <property type="entry name" value="Formate--tetrahydrofolate ligase"/>
    <property type="match status" value="1"/>
</dbReference>
<dbReference type="FunFam" id="3.10.410.10:FF:000001">
    <property type="entry name" value="Putative formate--tetrahydrofolate ligase"/>
    <property type="match status" value="1"/>
</dbReference>
<dbReference type="Gene3D" id="3.30.1510.10">
    <property type="entry name" value="Domain 2, N(10)-formyltetrahydrofolate synthetase"/>
    <property type="match status" value="1"/>
</dbReference>
<dbReference type="Gene3D" id="3.10.410.10">
    <property type="entry name" value="Formyltetrahydrofolate synthetase, domain 3"/>
    <property type="match status" value="1"/>
</dbReference>
<dbReference type="Gene3D" id="3.40.50.300">
    <property type="entry name" value="P-loop containing nucleotide triphosphate hydrolases"/>
    <property type="match status" value="1"/>
</dbReference>
<dbReference type="HAMAP" id="MF_01543">
    <property type="entry name" value="FTHFS"/>
    <property type="match status" value="1"/>
</dbReference>
<dbReference type="InterPro" id="IPR000559">
    <property type="entry name" value="Formate_THF_ligase"/>
</dbReference>
<dbReference type="InterPro" id="IPR020628">
    <property type="entry name" value="Formate_THF_ligase_CS"/>
</dbReference>
<dbReference type="InterPro" id="IPR027417">
    <property type="entry name" value="P-loop_NTPase"/>
</dbReference>
<dbReference type="NCBIfam" id="NF010030">
    <property type="entry name" value="PRK13505.1"/>
    <property type="match status" value="1"/>
</dbReference>
<dbReference type="Pfam" id="PF01268">
    <property type="entry name" value="FTHFS"/>
    <property type="match status" value="1"/>
</dbReference>
<dbReference type="SUPFAM" id="SSF52540">
    <property type="entry name" value="P-loop containing nucleoside triphosphate hydrolases"/>
    <property type="match status" value="1"/>
</dbReference>
<dbReference type="PROSITE" id="PS00721">
    <property type="entry name" value="FTHFS_1"/>
    <property type="match status" value="1"/>
</dbReference>
<dbReference type="PROSITE" id="PS00722">
    <property type="entry name" value="FTHFS_2"/>
    <property type="match status" value="1"/>
</dbReference>
<proteinExistence type="inferred from homology"/>